<feature type="chain" id="PRO_1000094497" description="3-dehydroquinate synthase">
    <location>
        <begin position="1"/>
        <end position="360"/>
    </location>
</feature>
<feature type="binding site" evidence="1">
    <location>
        <begin position="71"/>
        <end position="76"/>
    </location>
    <ligand>
        <name>NAD(+)</name>
        <dbReference type="ChEBI" id="CHEBI:57540"/>
    </ligand>
</feature>
<feature type="binding site" evidence="1">
    <location>
        <begin position="105"/>
        <end position="109"/>
    </location>
    <ligand>
        <name>NAD(+)</name>
        <dbReference type="ChEBI" id="CHEBI:57540"/>
    </ligand>
</feature>
<feature type="binding site" evidence="1">
    <location>
        <begin position="129"/>
        <end position="130"/>
    </location>
    <ligand>
        <name>NAD(+)</name>
        <dbReference type="ChEBI" id="CHEBI:57540"/>
    </ligand>
</feature>
<feature type="binding site" evidence="1">
    <location>
        <position position="142"/>
    </location>
    <ligand>
        <name>NAD(+)</name>
        <dbReference type="ChEBI" id="CHEBI:57540"/>
    </ligand>
</feature>
<feature type="binding site" evidence="1">
    <location>
        <position position="151"/>
    </location>
    <ligand>
        <name>NAD(+)</name>
        <dbReference type="ChEBI" id="CHEBI:57540"/>
    </ligand>
</feature>
<feature type="binding site" evidence="1">
    <location>
        <begin position="169"/>
        <end position="172"/>
    </location>
    <ligand>
        <name>NAD(+)</name>
        <dbReference type="ChEBI" id="CHEBI:57540"/>
    </ligand>
</feature>
<feature type="binding site" evidence="1">
    <location>
        <position position="184"/>
    </location>
    <ligand>
        <name>Zn(2+)</name>
        <dbReference type="ChEBI" id="CHEBI:29105"/>
    </ligand>
</feature>
<feature type="binding site" evidence="1">
    <location>
        <position position="248"/>
    </location>
    <ligand>
        <name>Zn(2+)</name>
        <dbReference type="ChEBI" id="CHEBI:29105"/>
    </ligand>
</feature>
<feature type="binding site" evidence="1">
    <location>
        <position position="265"/>
    </location>
    <ligand>
        <name>Zn(2+)</name>
        <dbReference type="ChEBI" id="CHEBI:29105"/>
    </ligand>
</feature>
<protein>
    <recommendedName>
        <fullName evidence="1">3-dehydroquinate synthase</fullName>
        <shortName evidence="1">DHQS</shortName>
        <ecNumber evidence="1">4.2.3.4</ecNumber>
    </recommendedName>
</protein>
<name>AROB_COXB2</name>
<keyword id="KW-0028">Amino-acid biosynthesis</keyword>
<keyword id="KW-0057">Aromatic amino acid biosynthesis</keyword>
<keyword id="KW-0170">Cobalt</keyword>
<keyword id="KW-0963">Cytoplasm</keyword>
<keyword id="KW-0456">Lyase</keyword>
<keyword id="KW-0479">Metal-binding</keyword>
<keyword id="KW-0520">NAD</keyword>
<keyword id="KW-0547">Nucleotide-binding</keyword>
<keyword id="KW-0862">Zinc</keyword>
<sequence>MKTERVNVNVNNQPYPIYIGENLLQDKSLLQRHVKGRQVMIVSNETIAAFYLDPLKAIYQDFQCDTFILPDGEQYKTLEYWERILHKLASCNHHRDTTLIALGGGVVGDITGFAAACYQRGVDFIQVPTTLLAQVDASIGGKTAVNHPVGKNLIGAFHQPKAVIIDLNTLNTLPEREFKAGMAEIVKAALIKDEKFFTDLENKMSALLQRNFIFLQAVIKRAAEIKRDIVNADEKERSGERTLLNLGHTFAHAIERLLGYGQWLHGEAVSAGLVLAAQLSHRKNLLDFESLQRICRLLTQISLPIHFPKSINADELLSAMYMDKKVANERLHLILLEDLGHAVVSDQVDDRELKSFLENG</sequence>
<organism>
    <name type="scientific">Coxiella burnetii (strain CbuG_Q212)</name>
    <name type="common">Coxiella burnetii (strain Q212)</name>
    <dbReference type="NCBI Taxonomy" id="434923"/>
    <lineage>
        <taxon>Bacteria</taxon>
        <taxon>Pseudomonadati</taxon>
        <taxon>Pseudomonadota</taxon>
        <taxon>Gammaproteobacteria</taxon>
        <taxon>Legionellales</taxon>
        <taxon>Coxiellaceae</taxon>
        <taxon>Coxiella</taxon>
    </lineage>
</organism>
<comment type="function">
    <text evidence="1">Catalyzes the conversion of 3-deoxy-D-arabino-heptulosonate 7-phosphate (DAHP) to dehydroquinate (DHQ).</text>
</comment>
<comment type="catalytic activity">
    <reaction evidence="1">
        <text>7-phospho-2-dehydro-3-deoxy-D-arabino-heptonate = 3-dehydroquinate + phosphate</text>
        <dbReference type="Rhea" id="RHEA:21968"/>
        <dbReference type="ChEBI" id="CHEBI:32364"/>
        <dbReference type="ChEBI" id="CHEBI:43474"/>
        <dbReference type="ChEBI" id="CHEBI:58394"/>
        <dbReference type="EC" id="4.2.3.4"/>
    </reaction>
</comment>
<comment type="cofactor">
    <cofactor evidence="1">
        <name>Co(2+)</name>
        <dbReference type="ChEBI" id="CHEBI:48828"/>
    </cofactor>
    <cofactor evidence="1">
        <name>Zn(2+)</name>
        <dbReference type="ChEBI" id="CHEBI:29105"/>
    </cofactor>
    <text evidence="1">Binds 1 divalent metal cation per subunit. Can use either Co(2+) or Zn(2+).</text>
</comment>
<comment type="cofactor">
    <cofactor evidence="1">
        <name>NAD(+)</name>
        <dbReference type="ChEBI" id="CHEBI:57540"/>
    </cofactor>
</comment>
<comment type="pathway">
    <text evidence="1">Metabolic intermediate biosynthesis; chorismate biosynthesis; chorismate from D-erythrose 4-phosphate and phosphoenolpyruvate: step 2/7.</text>
</comment>
<comment type="subcellular location">
    <subcellularLocation>
        <location evidence="1">Cytoplasm</location>
    </subcellularLocation>
</comment>
<comment type="similarity">
    <text evidence="1">Belongs to the sugar phosphate cyclases superfamily. Dehydroquinate synthase family.</text>
</comment>
<dbReference type="EC" id="4.2.3.4" evidence="1"/>
<dbReference type="EMBL" id="CP001019">
    <property type="protein sequence ID" value="ACJ17707.1"/>
    <property type="molecule type" value="Genomic_DNA"/>
</dbReference>
<dbReference type="RefSeq" id="WP_012569684.1">
    <property type="nucleotide sequence ID" value="NC_011527.1"/>
</dbReference>
<dbReference type="SMR" id="B6J3I1"/>
<dbReference type="KEGG" id="cbg:CbuG_0267"/>
<dbReference type="HOGENOM" id="CLU_001201_0_2_6"/>
<dbReference type="UniPathway" id="UPA00053">
    <property type="reaction ID" value="UER00085"/>
</dbReference>
<dbReference type="GO" id="GO:0005737">
    <property type="term" value="C:cytoplasm"/>
    <property type="evidence" value="ECO:0007669"/>
    <property type="project" value="UniProtKB-SubCell"/>
</dbReference>
<dbReference type="GO" id="GO:0003856">
    <property type="term" value="F:3-dehydroquinate synthase activity"/>
    <property type="evidence" value="ECO:0007669"/>
    <property type="project" value="UniProtKB-UniRule"/>
</dbReference>
<dbReference type="GO" id="GO:0046872">
    <property type="term" value="F:metal ion binding"/>
    <property type="evidence" value="ECO:0007669"/>
    <property type="project" value="UniProtKB-KW"/>
</dbReference>
<dbReference type="GO" id="GO:0000166">
    <property type="term" value="F:nucleotide binding"/>
    <property type="evidence" value="ECO:0007669"/>
    <property type="project" value="UniProtKB-KW"/>
</dbReference>
<dbReference type="GO" id="GO:0008652">
    <property type="term" value="P:amino acid biosynthetic process"/>
    <property type="evidence" value="ECO:0007669"/>
    <property type="project" value="UniProtKB-KW"/>
</dbReference>
<dbReference type="GO" id="GO:0009073">
    <property type="term" value="P:aromatic amino acid family biosynthetic process"/>
    <property type="evidence" value="ECO:0007669"/>
    <property type="project" value="UniProtKB-KW"/>
</dbReference>
<dbReference type="GO" id="GO:0009423">
    <property type="term" value="P:chorismate biosynthetic process"/>
    <property type="evidence" value="ECO:0007669"/>
    <property type="project" value="UniProtKB-UniRule"/>
</dbReference>
<dbReference type="CDD" id="cd08195">
    <property type="entry name" value="DHQS"/>
    <property type="match status" value="1"/>
</dbReference>
<dbReference type="FunFam" id="3.40.50.1970:FF:000035">
    <property type="entry name" value="3-dehydroquinate synthase"/>
    <property type="match status" value="1"/>
</dbReference>
<dbReference type="Gene3D" id="3.40.50.1970">
    <property type="match status" value="1"/>
</dbReference>
<dbReference type="Gene3D" id="1.20.1090.10">
    <property type="entry name" value="Dehydroquinate synthase-like - alpha domain"/>
    <property type="match status" value="1"/>
</dbReference>
<dbReference type="HAMAP" id="MF_00110">
    <property type="entry name" value="DHQ_synthase"/>
    <property type="match status" value="1"/>
</dbReference>
<dbReference type="InterPro" id="IPR050071">
    <property type="entry name" value="Dehydroquinate_synthase"/>
</dbReference>
<dbReference type="InterPro" id="IPR016037">
    <property type="entry name" value="DHQ_synth_AroB"/>
</dbReference>
<dbReference type="InterPro" id="IPR030963">
    <property type="entry name" value="DHQ_synth_fam"/>
</dbReference>
<dbReference type="InterPro" id="IPR030960">
    <property type="entry name" value="DHQS/DOIS_N"/>
</dbReference>
<dbReference type="InterPro" id="IPR056179">
    <property type="entry name" value="DHQS_C"/>
</dbReference>
<dbReference type="NCBIfam" id="TIGR01357">
    <property type="entry name" value="aroB"/>
    <property type="match status" value="1"/>
</dbReference>
<dbReference type="PANTHER" id="PTHR43622">
    <property type="entry name" value="3-DEHYDROQUINATE SYNTHASE"/>
    <property type="match status" value="1"/>
</dbReference>
<dbReference type="PANTHER" id="PTHR43622:SF7">
    <property type="entry name" value="3-DEHYDROQUINATE SYNTHASE, CHLOROPLASTIC"/>
    <property type="match status" value="1"/>
</dbReference>
<dbReference type="Pfam" id="PF01761">
    <property type="entry name" value="DHQ_synthase"/>
    <property type="match status" value="1"/>
</dbReference>
<dbReference type="Pfam" id="PF24621">
    <property type="entry name" value="DHQS_C"/>
    <property type="match status" value="1"/>
</dbReference>
<dbReference type="PIRSF" id="PIRSF001455">
    <property type="entry name" value="DHQ_synth"/>
    <property type="match status" value="1"/>
</dbReference>
<dbReference type="SUPFAM" id="SSF56796">
    <property type="entry name" value="Dehydroquinate synthase-like"/>
    <property type="match status" value="1"/>
</dbReference>
<accession>B6J3I1</accession>
<gene>
    <name evidence="1" type="primary">aroB</name>
    <name type="ordered locus">CbuG_0267</name>
</gene>
<proteinExistence type="inferred from homology"/>
<reference key="1">
    <citation type="journal article" date="2009" name="Infect. Immun.">
        <title>Comparative genomics reveal extensive transposon-mediated genomic plasticity and diversity among potential effector proteins within the genus Coxiella.</title>
        <authorList>
            <person name="Beare P.A."/>
            <person name="Unsworth N."/>
            <person name="Andoh M."/>
            <person name="Voth D.E."/>
            <person name="Omsland A."/>
            <person name="Gilk S.D."/>
            <person name="Williams K.P."/>
            <person name="Sobral B.W."/>
            <person name="Kupko J.J. III"/>
            <person name="Porcella S.F."/>
            <person name="Samuel J.E."/>
            <person name="Heinzen R.A."/>
        </authorList>
    </citation>
    <scope>NUCLEOTIDE SEQUENCE [LARGE SCALE GENOMIC DNA]</scope>
    <source>
        <strain>CbuG_Q212</strain>
    </source>
</reference>
<evidence type="ECO:0000255" key="1">
    <source>
        <dbReference type="HAMAP-Rule" id="MF_00110"/>
    </source>
</evidence>